<dbReference type="EMBL" id="Z33647">
    <property type="protein sequence ID" value="CAA83925.1"/>
    <property type="molecule type" value="Genomic_DNA"/>
</dbReference>
<dbReference type="EMBL" id="AE014297">
    <property type="protein sequence ID" value="AAF56515.1"/>
    <property type="molecule type" value="Genomic_DNA"/>
</dbReference>
<dbReference type="EMBL" id="AY118802">
    <property type="protein sequence ID" value="AAM50662.1"/>
    <property type="molecule type" value="mRNA"/>
</dbReference>
<dbReference type="RefSeq" id="NP_524906.1">
    <property type="nucleotide sequence ID" value="NM_080167.4"/>
</dbReference>
<dbReference type="BioGRID" id="71071">
    <property type="interactions" value="21"/>
</dbReference>
<dbReference type="DIP" id="DIP-20402N"/>
<dbReference type="FunCoup" id="Q9VBL6">
    <property type="interactions" value="22"/>
</dbReference>
<dbReference type="IntAct" id="Q9VBL6">
    <property type="interactions" value="21"/>
</dbReference>
<dbReference type="STRING" id="7227.FBpp0084288"/>
<dbReference type="PaxDb" id="7227-FBpp0084288"/>
<dbReference type="DNASU" id="47954"/>
<dbReference type="EnsemblMetazoa" id="FBtr0084914">
    <property type="protein sequence ID" value="FBpp0084288"/>
    <property type="gene ID" value="FBgn0011668"/>
</dbReference>
<dbReference type="GeneID" id="47954"/>
<dbReference type="KEGG" id="dme:Dmel_CG9074"/>
<dbReference type="AGR" id="FB:FBgn0011668"/>
<dbReference type="CTD" id="47954"/>
<dbReference type="FlyBase" id="FBgn0011668">
    <property type="gene designation" value="Mst57Da"/>
</dbReference>
<dbReference type="VEuPathDB" id="VectorBase:FBgn0011668"/>
<dbReference type="HOGENOM" id="CLU_2833890_0_0_1"/>
<dbReference type="InParanoid" id="Q9VBL6"/>
<dbReference type="OMA" id="ANPRQQY"/>
<dbReference type="SignaLink" id="Q9VBL6"/>
<dbReference type="BioGRID-ORCS" id="47954">
    <property type="hits" value="0 hits in 1 CRISPR screen"/>
</dbReference>
<dbReference type="GenomeRNAi" id="47954"/>
<dbReference type="PRO" id="PR:Q9VBL6"/>
<dbReference type="Proteomes" id="UP000000803">
    <property type="component" value="Chromosome 3R"/>
</dbReference>
<dbReference type="Bgee" id="FBgn0011668">
    <property type="expression patterns" value="Expressed in spermatid in male reproductive gland and 83 other cell types or tissues"/>
</dbReference>
<dbReference type="ExpressionAtlas" id="Q9VBL6">
    <property type="expression patterns" value="baseline and differential"/>
</dbReference>
<dbReference type="GO" id="GO:0005576">
    <property type="term" value="C:extracellular region"/>
    <property type="evidence" value="ECO:0000255"/>
    <property type="project" value="FlyBase"/>
</dbReference>
<dbReference type="GO" id="GO:0005615">
    <property type="term" value="C:extracellular space"/>
    <property type="evidence" value="ECO:0007005"/>
    <property type="project" value="FlyBase"/>
</dbReference>
<dbReference type="GO" id="GO:0018991">
    <property type="term" value="P:egg-laying behavior"/>
    <property type="evidence" value="ECO:0000303"/>
    <property type="project" value="UniProtKB"/>
</dbReference>
<dbReference type="GO" id="GO:0045924">
    <property type="term" value="P:regulation of female receptivity"/>
    <property type="evidence" value="ECO:0000303"/>
    <property type="project" value="UniProtKB"/>
</dbReference>
<dbReference type="GO" id="GO:0019953">
    <property type="term" value="P:sexual reproduction"/>
    <property type="evidence" value="ECO:0000270"/>
    <property type="project" value="FlyBase"/>
</dbReference>
<evidence type="ECO:0000255" key="1"/>
<evidence type="ECO:0000256" key="2">
    <source>
        <dbReference type="SAM" id="MobiDB-lite"/>
    </source>
</evidence>
<evidence type="ECO:0000269" key="3">
    <source>
    </source>
</evidence>
<evidence type="ECO:0000305" key="4"/>
<sequence>MKFLALFVTLLVVLALVSAQKSQNTNHNVIVIGAKKPGAAPAAAAAAAPAAPPAAAPAAAPAAPEAGLADAPAES</sequence>
<organism>
    <name type="scientific">Drosophila melanogaster</name>
    <name type="common">Fruit fly</name>
    <dbReference type="NCBI Taxonomy" id="7227"/>
    <lineage>
        <taxon>Eukaryota</taxon>
        <taxon>Metazoa</taxon>
        <taxon>Ecdysozoa</taxon>
        <taxon>Arthropoda</taxon>
        <taxon>Hexapoda</taxon>
        <taxon>Insecta</taxon>
        <taxon>Pterygota</taxon>
        <taxon>Neoptera</taxon>
        <taxon>Endopterygota</taxon>
        <taxon>Diptera</taxon>
        <taxon>Brachycera</taxon>
        <taxon>Muscomorpha</taxon>
        <taxon>Ephydroidea</taxon>
        <taxon>Drosophilidae</taxon>
        <taxon>Drosophila</taxon>
        <taxon>Sophophora</taxon>
    </lineage>
</organism>
<reference evidence="4" key="1">
    <citation type="journal article" date="1995" name="Insect Biochem. Mol. Biol.">
        <title>Structure and regulation of a gene cluster for male accessory gland transcripts in Drosophila melanogaster.</title>
        <authorList>
            <person name="Simmerl E."/>
            <person name="Schaefer M."/>
            <person name="Schaefer U."/>
        </authorList>
    </citation>
    <scope>NUCLEOTIDE SEQUENCE [GENOMIC DNA]</scope>
    <scope>TISSUE SPECIFICITY</scope>
    <source>
        <strain>Oregon-R</strain>
    </source>
</reference>
<reference evidence="4" key="2">
    <citation type="journal article" date="2000" name="Science">
        <title>The genome sequence of Drosophila melanogaster.</title>
        <authorList>
            <person name="Adams M.D."/>
            <person name="Celniker S.E."/>
            <person name="Holt R.A."/>
            <person name="Evans C.A."/>
            <person name="Gocayne J.D."/>
            <person name="Amanatides P.G."/>
            <person name="Scherer S.E."/>
            <person name="Li P.W."/>
            <person name="Hoskins R.A."/>
            <person name="Galle R.F."/>
            <person name="George R.A."/>
            <person name="Lewis S.E."/>
            <person name="Richards S."/>
            <person name="Ashburner M."/>
            <person name="Henderson S.N."/>
            <person name="Sutton G.G."/>
            <person name="Wortman J.R."/>
            <person name="Yandell M.D."/>
            <person name="Zhang Q."/>
            <person name="Chen L.X."/>
            <person name="Brandon R.C."/>
            <person name="Rogers Y.-H.C."/>
            <person name="Blazej R.G."/>
            <person name="Champe M."/>
            <person name="Pfeiffer B.D."/>
            <person name="Wan K.H."/>
            <person name="Doyle C."/>
            <person name="Baxter E.G."/>
            <person name="Helt G."/>
            <person name="Nelson C.R."/>
            <person name="Miklos G.L.G."/>
            <person name="Abril J.F."/>
            <person name="Agbayani A."/>
            <person name="An H.-J."/>
            <person name="Andrews-Pfannkoch C."/>
            <person name="Baldwin D."/>
            <person name="Ballew R.M."/>
            <person name="Basu A."/>
            <person name="Baxendale J."/>
            <person name="Bayraktaroglu L."/>
            <person name="Beasley E.M."/>
            <person name="Beeson K.Y."/>
            <person name="Benos P.V."/>
            <person name="Berman B.P."/>
            <person name="Bhandari D."/>
            <person name="Bolshakov S."/>
            <person name="Borkova D."/>
            <person name="Botchan M.R."/>
            <person name="Bouck J."/>
            <person name="Brokstein P."/>
            <person name="Brottier P."/>
            <person name="Burtis K.C."/>
            <person name="Busam D.A."/>
            <person name="Butler H."/>
            <person name="Cadieu E."/>
            <person name="Center A."/>
            <person name="Chandra I."/>
            <person name="Cherry J.M."/>
            <person name="Cawley S."/>
            <person name="Dahlke C."/>
            <person name="Davenport L.B."/>
            <person name="Davies P."/>
            <person name="de Pablos B."/>
            <person name="Delcher A."/>
            <person name="Deng Z."/>
            <person name="Mays A.D."/>
            <person name="Dew I."/>
            <person name="Dietz S.M."/>
            <person name="Dodson K."/>
            <person name="Doup L.E."/>
            <person name="Downes M."/>
            <person name="Dugan-Rocha S."/>
            <person name="Dunkov B.C."/>
            <person name="Dunn P."/>
            <person name="Durbin K.J."/>
            <person name="Evangelista C.C."/>
            <person name="Ferraz C."/>
            <person name="Ferriera S."/>
            <person name="Fleischmann W."/>
            <person name="Fosler C."/>
            <person name="Gabrielian A.E."/>
            <person name="Garg N.S."/>
            <person name="Gelbart W.M."/>
            <person name="Glasser K."/>
            <person name="Glodek A."/>
            <person name="Gong F."/>
            <person name="Gorrell J.H."/>
            <person name="Gu Z."/>
            <person name="Guan P."/>
            <person name="Harris M."/>
            <person name="Harris N.L."/>
            <person name="Harvey D.A."/>
            <person name="Heiman T.J."/>
            <person name="Hernandez J.R."/>
            <person name="Houck J."/>
            <person name="Hostin D."/>
            <person name="Houston K.A."/>
            <person name="Howland T.J."/>
            <person name="Wei M.-H."/>
            <person name="Ibegwam C."/>
            <person name="Jalali M."/>
            <person name="Kalush F."/>
            <person name="Karpen G.H."/>
            <person name="Ke Z."/>
            <person name="Kennison J.A."/>
            <person name="Ketchum K.A."/>
            <person name="Kimmel B.E."/>
            <person name="Kodira C.D."/>
            <person name="Kraft C.L."/>
            <person name="Kravitz S."/>
            <person name="Kulp D."/>
            <person name="Lai Z."/>
            <person name="Lasko P."/>
            <person name="Lei Y."/>
            <person name="Levitsky A.A."/>
            <person name="Li J.H."/>
            <person name="Li Z."/>
            <person name="Liang Y."/>
            <person name="Lin X."/>
            <person name="Liu X."/>
            <person name="Mattei B."/>
            <person name="McIntosh T.C."/>
            <person name="McLeod M.P."/>
            <person name="McPherson D."/>
            <person name="Merkulov G."/>
            <person name="Milshina N.V."/>
            <person name="Mobarry C."/>
            <person name="Morris J."/>
            <person name="Moshrefi A."/>
            <person name="Mount S.M."/>
            <person name="Moy M."/>
            <person name="Murphy B."/>
            <person name="Murphy L."/>
            <person name="Muzny D.M."/>
            <person name="Nelson D.L."/>
            <person name="Nelson D.R."/>
            <person name="Nelson K.A."/>
            <person name="Nixon K."/>
            <person name="Nusskern D.R."/>
            <person name="Pacleb J.M."/>
            <person name="Palazzolo M."/>
            <person name="Pittman G.S."/>
            <person name="Pan S."/>
            <person name="Pollard J."/>
            <person name="Puri V."/>
            <person name="Reese M.G."/>
            <person name="Reinert K."/>
            <person name="Remington K."/>
            <person name="Saunders R.D.C."/>
            <person name="Scheeler F."/>
            <person name="Shen H."/>
            <person name="Shue B.C."/>
            <person name="Siden-Kiamos I."/>
            <person name="Simpson M."/>
            <person name="Skupski M.P."/>
            <person name="Smith T.J."/>
            <person name="Spier E."/>
            <person name="Spradling A.C."/>
            <person name="Stapleton M."/>
            <person name="Strong R."/>
            <person name="Sun E."/>
            <person name="Svirskas R."/>
            <person name="Tector C."/>
            <person name="Turner R."/>
            <person name="Venter E."/>
            <person name="Wang A.H."/>
            <person name="Wang X."/>
            <person name="Wang Z.-Y."/>
            <person name="Wassarman D.A."/>
            <person name="Weinstock G.M."/>
            <person name="Weissenbach J."/>
            <person name="Williams S.M."/>
            <person name="Woodage T."/>
            <person name="Worley K.C."/>
            <person name="Wu D."/>
            <person name="Yang S."/>
            <person name="Yao Q.A."/>
            <person name="Ye J."/>
            <person name="Yeh R.-F."/>
            <person name="Zaveri J.S."/>
            <person name="Zhan M."/>
            <person name="Zhang G."/>
            <person name="Zhao Q."/>
            <person name="Zheng L."/>
            <person name="Zheng X.H."/>
            <person name="Zhong F.N."/>
            <person name="Zhong W."/>
            <person name="Zhou X."/>
            <person name="Zhu S.C."/>
            <person name="Zhu X."/>
            <person name="Smith H.O."/>
            <person name="Gibbs R.A."/>
            <person name="Myers E.W."/>
            <person name="Rubin G.M."/>
            <person name="Venter J.C."/>
        </authorList>
    </citation>
    <scope>NUCLEOTIDE SEQUENCE [LARGE SCALE GENOMIC DNA]</scope>
    <source>
        <strain>Berkeley</strain>
    </source>
</reference>
<reference key="3">
    <citation type="journal article" date="2002" name="Genome Biol.">
        <title>Annotation of the Drosophila melanogaster euchromatic genome: a systematic review.</title>
        <authorList>
            <person name="Misra S."/>
            <person name="Crosby M.A."/>
            <person name="Mungall C.J."/>
            <person name="Matthews B.B."/>
            <person name="Campbell K.S."/>
            <person name="Hradecky P."/>
            <person name="Huang Y."/>
            <person name="Kaminker J.S."/>
            <person name="Millburn G.H."/>
            <person name="Prochnik S.E."/>
            <person name="Smith C.D."/>
            <person name="Tupy J.L."/>
            <person name="Whitfield E.J."/>
            <person name="Bayraktaroglu L."/>
            <person name="Berman B.P."/>
            <person name="Bettencourt B.R."/>
            <person name="Celniker S.E."/>
            <person name="de Grey A.D.N.J."/>
            <person name="Drysdale R.A."/>
            <person name="Harris N.L."/>
            <person name="Richter J."/>
            <person name="Russo S."/>
            <person name="Schroeder A.J."/>
            <person name="Shu S.Q."/>
            <person name="Stapleton M."/>
            <person name="Yamada C."/>
            <person name="Ashburner M."/>
            <person name="Gelbart W.M."/>
            <person name="Rubin G.M."/>
            <person name="Lewis S.E."/>
        </authorList>
    </citation>
    <scope>GENOME REANNOTATION</scope>
    <source>
        <strain>Berkeley</strain>
    </source>
</reference>
<reference key="4">
    <citation type="journal article" date="2002" name="Genome Biol.">
        <title>A Drosophila full-length cDNA resource.</title>
        <authorList>
            <person name="Stapleton M."/>
            <person name="Carlson J.W."/>
            <person name="Brokstein P."/>
            <person name="Yu C."/>
            <person name="Champe M."/>
            <person name="George R.A."/>
            <person name="Guarin H."/>
            <person name="Kronmiller B."/>
            <person name="Pacleb J.M."/>
            <person name="Park S."/>
            <person name="Wan K.H."/>
            <person name="Rubin G.M."/>
            <person name="Celniker S.E."/>
        </authorList>
    </citation>
    <scope>NUCLEOTIDE SEQUENCE [LARGE SCALE MRNA] OF 2-75</scope>
    <source>
        <strain>Berkeley</strain>
        <tissue>Head</tissue>
    </source>
</reference>
<protein>
    <recommendedName>
        <fullName>Accessory gland-specific peptide 57Da</fullName>
    </recommendedName>
    <alternativeName>
        <fullName>Male accessory gland secretory protein 57Da</fullName>
    </alternativeName>
</protein>
<keyword id="KW-0085">Behavior</keyword>
<keyword id="KW-1185">Reference proteome</keyword>
<keyword id="KW-0964">Secreted</keyword>
<keyword id="KW-0732">Signal</keyword>
<gene>
    <name type="primary">Mst57Da</name>
    <name type="ORF">CG9074</name>
</gene>
<comment type="function">
    <text>Transferred from male to female during mating and may affect egglaying and behavior after mating.</text>
</comment>
<comment type="subcellular location">
    <subcellularLocation>
        <location evidence="3">Secreted</location>
    </subcellularLocation>
</comment>
<comment type="tissue specificity">
    <text evidence="3">Lumen fluid of male accessory glands, becomes seminal fluid.</text>
</comment>
<accession>Q9VBL6</accession>
<accession>Q24390</accession>
<accession>Q8MSH9</accession>
<name>MS57A_DROME</name>
<proteinExistence type="evidence at transcript level"/>
<feature type="signal peptide" evidence="1">
    <location>
        <begin position="1"/>
        <end position="19"/>
    </location>
</feature>
<feature type="peptide" id="PRO_0000021762" description="Accessory gland-specific peptide 57Da">
    <location>
        <begin position="20"/>
        <end position="75"/>
    </location>
</feature>
<feature type="region of interest" description="Disordered" evidence="2">
    <location>
        <begin position="55"/>
        <end position="75"/>
    </location>
</feature>
<feature type="compositionally biased region" description="Low complexity" evidence="2">
    <location>
        <begin position="56"/>
        <end position="75"/>
    </location>
</feature>
<feature type="sequence conflict" description="In Ref. 1." evidence="4" ref="1">
    <location>
        <begin position="39"/>
        <end position="46"/>
    </location>
</feature>
<feature type="sequence conflict" description="In Ref. 1; CAA83925." evidence="4" ref="1">
    <location>
        <begin position="64"/>
        <end position="75"/>
    </location>
</feature>